<feature type="peptide" id="PRO_0000044815" description="Peptide YY-like">
    <location>
        <begin position="1"/>
        <end position="36"/>
    </location>
</feature>
<feature type="modified residue" description="Tyrosine amide" evidence="1">
    <location>
        <position position="36"/>
    </location>
</feature>
<proteinExistence type="evidence at protein level"/>
<sequence length="36" mass="4305">YPPKPENPGEDAPPEELAKYYTALRHYINLITRQRY</sequence>
<organism>
    <name type="scientific">Oncorhynchus kisutch</name>
    <name type="common">Coho salmon</name>
    <name type="synonym">Salmo kisutch</name>
    <dbReference type="NCBI Taxonomy" id="8019"/>
    <lineage>
        <taxon>Eukaryota</taxon>
        <taxon>Metazoa</taxon>
        <taxon>Chordata</taxon>
        <taxon>Craniata</taxon>
        <taxon>Vertebrata</taxon>
        <taxon>Euteleostomi</taxon>
        <taxon>Actinopterygii</taxon>
        <taxon>Neopterygii</taxon>
        <taxon>Teleostei</taxon>
        <taxon>Protacanthopterygii</taxon>
        <taxon>Salmoniformes</taxon>
        <taxon>Salmonidae</taxon>
        <taxon>Salmoninae</taxon>
        <taxon>Oncorhynchus</taxon>
    </lineage>
</organism>
<accession>P69092</accession>
<accession>P09474</accession>
<evidence type="ECO:0000269" key="1">
    <source>
    </source>
</evidence>
<evidence type="ECO:0000305" key="2"/>
<comment type="subcellular location">
    <subcellularLocation>
        <location>Secreted</location>
    </subcellularLocation>
</comment>
<comment type="similarity">
    <text evidence="2">Belongs to the NPY family.</text>
</comment>
<keyword id="KW-0027">Amidation</keyword>
<keyword id="KW-0903">Direct protein sequencing</keyword>
<keyword id="KW-0372">Hormone</keyword>
<keyword id="KW-1185">Reference proteome</keyword>
<keyword id="KW-0964">Secreted</keyword>
<protein>
    <recommendedName>
        <fullName>Peptide YY-like</fullName>
        <shortName>PYY</shortName>
    </recommendedName>
</protein>
<dbReference type="PIR" id="A26377">
    <property type="entry name" value="A26377"/>
</dbReference>
<dbReference type="SMR" id="P69092"/>
<dbReference type="Proteomes" id="UP000694557">
    <property type="component" value="Unplaced"/>
</dbReference>
<dbReference type="GO" id="GO:0005615">
    <property type="term" value="C:extracellular space"/>
    <property type="evidence" value="ECO:0007669"/>
    <property type="project" value="TreeGrafter"/>
</dbReference>
<dbReference type="GO" id="GO:0005184">
    <property type="term" value="F:neuropeptide hormone activity"/>
    <property type="evidence" value="ECO:0007669"/>
    <property type="project" value="TreeGrafter"/>
</dbReference>
<dbReference type="GO" id="GO:0031841">
    <property type="term" value="F:neuropeptide Y receptor binding"/>
    <property type="evidence" value="ECO:0007669"/>
    <property type="project" value="TreeGrafter"/>
</dbReference>
<dbReference type="GO" id="GO:0007631">
    <property type="term" value="P:feeding behavior"/>
    <property type="evidence" value="ECO:0007669"/>
    <property type="project" value="TreeGrafter"/>
</dbReference>
<dbReference type="GO" id="GO:0007218">
    <property type="term" value="P:neuropeptide signaling pathway"/>
    <property type="evidence" value="ECO:0007669"/>
    <property type="project" value="TreeGrafter"/>
</dbReference>
<dbReference type="CDD" id="cd00126">
    <property type="entry name" value="PAH"/>
    <property type="match status" value="1"/>
</dbReference>
<dbReference type="Gene3D" id="6.10.250.900">
    <property type="match status" value="1"/>
</dbReference>
<dbReference type="InterPro" id="IPR001955">
    <property type="entry name" value="Pancreatic_hormone-like"/>
</dbReference>
<dbReference type="InterPro" id="IPR020392">
    <property type="entry name" value="Pancreatic_hormone-like_CS"/>
</dbReference>
<dbReference type="PANTHER" id="PTHR10533">
    <property type="entry name" value="NEUROPEPTIDE Y/PANCREATIC HORMONE/PEPTIDE YY"/>
    <property type="match status" value="1"/>
</dbReference>
<dbReference type="PANTHER" id="PTHR10533:SF14">
    <property type="entry name" value="PEPTIDE YY-RELATED"/>
    <property type="match status" value="1"/>
</dbReference>
<dbReference type="Pfam" id="PF00159">
    <property type="entry name" value="Hormone_3"/>
    <property type="match status" value="1"/>
</dbReference>
<dbReference type="PRINTS" id="PR00278">
    <property type="entry name" value="PANCHORMONE"/>
</dbReference>
<dbReference type="SMART" id="SM00309">
    <property type="entry name" value="PAH"/>
    <property type="match status" value="1"/>
</dbReference>
<dbReference type="PROSITE" id="PS00265">
    <property type="entry name" value="PANCREATIC_HORMONE_1"/>
    <property type="match status" value="1"/>
</dbReference>
<dbReference type="PROSITE" id="PS50276">
    <property type="entry name" value="PANCREATIC_HORMONE_2"/>
    <property type="match status" value="1"/>
</dbReference>
<name>PYY_ONCKI</name>
<reference key="1">
    <citation type="journal article" date="1986" name="Biochem. Biophys. Res. Commun.">
        <title>Structure of a peptide from coho salmon endocrine pancreas with homology to neuropeptide Y.</title>
        <authorList>
            <person name="Kimmel J.R."/>
            <person name="Plisetskaya E.M."/>
            <person name="Pollock H.G."/>
            <person name="Hamilton J.W."/>
            <person name="Rouse J.B."/>
            <person name="Ebner K.E."/>
            <person name="Rawitch A.B."/>
        </authorList>
    </citation>
    <scope>PROTEIN SEQUENCE</scope>
    <scope>AMIDATION AT TYR-36</scope>
    <source>
        <tissue>Pancreas</tissue>
    </source>
</reference>